<sequence>MNKKILFLGVGGIGVSALAIAAKRLGAHVAGYDSAANKLTAKLEALGIVIFTSPSGVDVANFDIVVYSSAILSSHPLLSQARSLGIQCLQRAMFLAVLMKDFSYSLAITGTHGKTTTSSVLATLLCQLDKHSSFVVGGVVKYADSNIQVNGTDKLVIEADESDASFLFLSPQVVIITNIDLDHMATYNNSYQTLLENFTDFVSKESVKSIYLCVDDQGCRDLLAKYNQSDKNVTSYGFSINADVQIYDYHIIDEITHFKIRYKGDDLSFKLQLPGKYNVQNATACIIACLDLGFKYEDIRNALIKVTGVARRFDLYTKVISGHQVTVIDDYGHHPVEVANSISAVRDRYPNKKIIHVFQPHRYTRNRDLIKDWPKALSLADQLILLPTYSAGEQIIKGAESQDIAKGLSGYLLADGFDHAIYFLEKLANENTVILIQGAGDVTNLVEMLSE</sequence>
<organism>
    <name type="scientific">Francisella tularensis subsp. novicida (strain U112)</name>
    <dbReference type="NCBI Taxonomy" id="401614"/>
    <lineage>
        <taxon>Bacteria</taxon>
        <taxon>Pseudomonadati</taxon>
        <taxon>Pseudomonadota</taxon>
        <taxon>Gammaproteobacteria</taxon>
        <taxon>Thiotrichales</taxon>
        <taxon>Francisellaceae</taxon>
        <taxon>Francisella</taxon>
    </lineage>
</organism>
<protein>
    <recommendedName>
        <fullName evidence="1">UDP-N-acetylmuramate--L-alanine ligase</fullName>
        <ecNumber evidence="1">6.3.2.8</ecNumber>
    </recommendedName>
    <alternativeName>
        <fullName evidence="1">UDP-N-acetylmuramoyl-L-alanine synthetase</fullName>
    </alternativeName>
</protein>
<dbReference type="EC" id="6.3.2.8" evidence="1"/>
<dbReference type="EMBL" id="CP000439">
    <property type="protein sequence ID" value="ABK88990.1"/>
    <property type="molecule type" value="Genomic_DNA"/>
</dbReference>
<dbReference type="RefSeq" id="WP_003040924.1">
    <property type="nucleotide sequence ID" value="NZ_CP009633.1"/>
</dbReference>
<dbReference type="SMR" id="A0Q425"/>
<dbReference type="KEGG" id="ftn:FTN_0079"/>
<dbReference type="KEGG" id="ftx:AW25_122"/>
<dbReference type="BioCyc" id="FTUL401614:G1G75-82-MONOMER"/>
<dbReference type="UniPathway" id="UPA00219"/>
<dbReference type="Proteomes" id="UP000000762">
    <property type="component" value="Chromosome"/>
</dbReference>
<dbReference type="GO" id="GO:0005737">
    <property type="term" value="C:cytoplasm"/>
    <property type="evidence" value="ECO:0007669"/>
    <property type="project" value="UniProtKB-SubCell"/>
</dbReference>
<dbReference type="GO" id="GO:0005524">
    <property type="term" value="F:ATP binding"/>
    <property type="evidence" value="ECO:0007669"/>
    <property type="project" value="UniProtKB-UniRule"/>
</dbReference>
<dbReference type="GO" id="GO:0008763">
    <property type="term" value="F:UDP-N-acetylmuramate-L-alanine ligase activity"/>
    <property type="evidence" value="ECO:0007669"/>
    <property type="project" value="UniProtKB-UniRule"/>
</dbReference>
<dbReference type="GO" id="GO:0051301">
    <property type="term" value="P:cell division"/>
    <property type="evidence" value="ECO:0007669"/>
    <property type="project" value="UniProtKB-KW"/>
</dbReference>
<dbReference type="GO" id="GO:0071555">
    <property type="term" value="P:cell wall organization"/>
    <property type="evidence" value="ECO:0007669"/>
    <property type="project" value="UniProtKB-KW"/>
</dbReference>
<dbReference type="GO" id="GO:0009252">
    <property type="term" value="P:peptidoglycan biosynthetic process"/>
    <property type="evidence" value="ECO:0007669"/>
    <property type="project" value="UniProtKB-UniRule"/>
</dbReference>
<dbReference type="GO" id="GO:0008360">
    <property type="term" value="P:regulation of cell shape"/>
    <property type="evidence" value="ECO:0007669"/>
    <property type="project" value="UniProtKB-KW"/>
</dbReference>
<dbReference type="Gene3D" id="3.90.190.20">
    <property type="entry name" value="Mur ligase, C-terminal domain"/>
    <property type="match status" value="1"/>
</dbReference>
<dbReference type="Gene3D" id="3.40.1190.10">
    <property type="entry name" value="Mur-like, catalytic domain"/>
    <property type="match status" value="1"/>
</dbReference>
<dbReference type="Gene3D" id="3.40.50.720">
    <property type="entry name" value="NAD(P)-binding Rossmann-like Domain"/>
    <property type="match status" value="1"/>
</dbReference>
<dbReference type="HAMAP" id="MF_00046">
    <property type="entry name" value="MurC"/>
    <property type="match status" value="1"/>
</dbReference>
<dbReference type="InterPro" id="IPR036565">
    <property type="entry name" value="Mur-like_cat_sf"/>
</dbReference>
<dbReference type="InterPro" id="IPR004101">
    <property type="entry name" value="Mur_ligase_C"/>
</dbReference>
<dbReference type="InterPro" id="IPR036615">
    <property type="entry name" value="Mur_ligase_C_dom_sf"/>
</dbReference>
<dbReference type="InterPro" id="IPR013221">
    <property type="entry name" value="Mur_ligase_cen"/>
</dbReference>
<dbReference type="InterPro" id="IPR000713">
    <property type="entry name" value="Mur_ligase_N"/>
</dbReference>
<dbReference type="InterPro" id="IPR050061">
    <property type="entry name" value="MurCDEF_pg_biosynth"/>
</dbReference>
<dbReference type="InterPro" id="IPR005758">
    <property type="entry name" value="UDP-N-AcMur_Ala_ligase_MurC"/>
</dbReference>
<dbReference type="NCBIfam" id="TIGR01082">
    <property type="entry name" value="murC"/>
    <property type="match status" value="1"/>
</dbReference>
<dbReference type="PANTHER" id="PTHR43445:SF3">
    <property type="entry name" value="UDP-N-ACETYLMURAMATE--L-ALANINE LIGASE"/>
    <property type="match status" value="1"/>
</dbReference>
<dbReference type="PANTHER" id="PTHR43445">
    <property type="entry name" value="UDP-N-ACETYLMURAMATE--L-ALANINE LIGASE-RELATED"/>
    <property type="match status" value="1"/>
</dbReference>
<dbReference type="Pfam" id="PF01225">
    <property type="entry name" value="Mur_ligase"/>
    <property type="match status" value="1"/>
</dbReference>
<dbReference type="Pfam" id="PF02875">
    <property type="entry name" value="Mur_ligase_C"/>
    <property type="match status" value="1"/>
</dbReference>
<dbReference type="Pfam" id="PF08245">
    <property type="entry name" value="Mur_ligase_M"/>
    <property type="match status" value="1"/>
</dbReference>
<dbReference type="SUPFAM" id="SSF51984">
    <property type="entry name" value="MurCD N-terminal domain"/>
    <property type="match status" value="1"/>
</dbReference>
<dbReference type="SUPFAM" id="SSF53623">
    <property type="entry name" value="MurD-like peptide ligases, catalytic domain"/>
    <property type="match status" value="1"/>
</dbReference>
<dbReference type="SUPFAM" id="SSF53244">
    <property type="entry name" value="MurD-like peptide ligases, peptide-binding domain"/>
    <property type="match status" value="1"/>
</dbReference>
<proteinExistence type="inferred from homology"/>
<accession>A0Q425</accession>
<evidence type="ECO:0000255" key="1">
    <source>
        <dbReference type="HAMAP-Rule" id="MF_00046"/>
    </source>
</evidence>
<comment type="function">
    <text evidence="1">Cell wall formation.</text>
</comment>
<comment type="catalytic activity">
    <reaction evidence="1">
        <text>UDP-N-acetyl-alpha-D-muramate + L-alanine + ATP = UDP-N-acetyl-alpha-D-muramoyl-L-alanine + ADP + phosphate + H(+)</text>
        <dbReference type="Rhea" id="RHEA:23372"/>
        <dbReference type="ChEBI" id="CHEBI:15378"/>
        <dbReference type="ChEBI" id="CHEBI:30616"/>
        <dbReference type="ChEBI" id="CHEBI:43474"/>
        <dbReference type="ChEBI" id="CHEBI:57972"/>
        <dbReference type="ChEBI" id="CHEBI:70757"/>
        <dbReference type="ChEBI" id="CHEBI:83898"/>
        <dbReference type="ChEBI" id="CHEBI:456216"/>
        <dbReference type="EC" id="6.3.2.8"/>
    </reaction>
</comment>
<comment type="pathway">
    <text evidence="1">Cell wall biogenesis; peptidoglycan biosynthesis.</text>
</comment>
<comment type="subcellular location">
    <subcellularLocation>
        <location evidence="1">Cytoplasm</location>
    </subcellularLocation>
</comment>
<comment type="similarity">
    <text evidence="1">Belongs to the MurCDEF family.</text>
</comment>
<keyword id="KW-0067">ATP-binding</keyword>
<keyword id="KW-0131">Cell cycle</keyword>
<keyword id="KW-0132">Cell division</keyword>
<keyword id="KW-0133">Cell shape</keyword>
<keyword id="KW-0961">Cell wall biogenesis/degradation</keyword>
<keyword id="KW-0963">Cytoplasm</keyword>
<keyword id="KW-0436">Ligase</keyword>
<keyword id="KW-0547">Nucleotide-binding</keyword>
<keyword id="KW-0573">Peptidoglycan synthesis</keyword>
<feature type="chain" id="PRO_1000004345" description="UDP-N-acetylmuramate--L-alanine ligase">
    <location>
        <begin position="1"/>
        <end position="451"/>
    </location>
</feature>
<feature type="binding site" evidence="1">
    <location>
        <begin position="110"/>
        <end position="116"/>
    </location>
    <ligand>
        <name>ATP</name>
        <dbReference type="ChEBI" id="CHEBI:30616"/>
    </ligand>
</feature>
<name>MURC_FRATN</name>
<reference key="1">
    <citation type="journal article" date="2007" name="Genome Biol.">
        <title>Comparison of Francisella tularensis genomes reveals evolutionary events associated with the emergence of human pathogenic strains.</title>
        <authorList>
            <person name="Rohmer L."/>
            <person name="Fong C."/>
            <person name="Abmayr S."/>
            <person name="Wasnick M."/>
            <person name="Larson Freeman T.J."/>
            <person name="Radey M."/>
            <person name="Guina T."/>
            <person name="Svensson K."/>
            <person name="Hayden H.S."/>
            <person name="Jacobs M."/>
            <person name="Gallagher L.A."/>
            <person name="Manoil C."/>
            <person name="Ernst R.K."/>
            <person name="Drees B."/>
            <person name="Buckley D."/>
            <person name="Haugen E."/>
            <person name="Bovee D."/>
            <person name="Zhou Y."/>
            <person name="Chang J."/>
            <person name="Levy R."/>
            <person name="Lim R."/>
            <person name="Gillett W."/>
            <person name="Guenthener D."/>
            <person name="Kang A."/>
            <person name="Shaffer S.A."/>
            <person name="Taylor G."/>
            <person name="Chen J."/>
            <person name="Gallis B."/>
            <person name="D'Argenio D.A."/>
            <person name="Forsman M."/>
            <person name="Olson M.V."/>
            <person name="Goodlett D.R."/>
            <person name="Kaul R."/>
            <person name="Miller S.I."/>
            <person name="Brittnacher M.J."/>
        </authorList>
    </citation>
    <scope>NUCLEOTIDE SEQUENCE [LARGE SCALE GENOMIC DNA]</scope>
    <source>
        <strain>U112</strain>
    </source>
</reference>
<gene>
    <name evidence="1" type="primary">murC</name>
    <name type="ordered locus">FTN_0079</name>
</gene>